<accession>Q8RD43</accession>
<feature type="chain" id="PRO_0000261112" description="Ribose import ATP-binding protein RbsA">
    <location>
        <begin position="1"/>
        <end position="496"/>
    </location>
</feature>
<feature type="domain" description="ABC transporter 1" evidence="1">
    <location>
        <begin position="5"/>
        <end position="241"/>
    </location>
</feature>
<feature type="domain" description="ABC transporter 2" evidence="1">
    <location>
        <begin position="252"/>
        <end position="496"/>
    </location>
</feature>
<feature type="binding site" evidence="1">
    <location>
        <begin position="37"/>
        <end position="44"/>
    </location>
    <ligand>
        <name>ATP</name>
        <dbReference type="ChEBI" id="CHEBI:30616"/>
    </ligand>
</feature>
<evidence type="ECO:0000255" key="1">
    <source>
        <dbReference type="HAMAP-Rule" id="MF_01716"/>
    </source>
</evidence>
<dbReference type="EC" id="7.5.2.7" evidence="1"/>
<dbReference type="EMBL" id="AE008691">
    <property type="protein sequence ID" value="AAM23505.1"/>
    <property type="molecule type" value="Genomic_DNA"/>
</dbReference>
<dbReference type="RefSeq" id="WP_009609666.1">
    <property type="nucleotide sequence ID" value="NZ_JANUCV010000001.1"/>
</dbReference>
<dbReference type="SMR" id="Q8RD43"/>
<dbReference type="STRING" id="273068.TTE0204"/>
<dbReference type="KEGG" id="tte:TTE0204"/>
<dbReference type="eggNOG" id="COG1129">
    <property type="taxonomic scope" value="Bacteria"/>
</dbReference>
<dbReference type="HOGENOM" id="CLU_000604_92_3_9"/>
<dbReference type="OrthoDB" id="9771863at2"/>
<dbReference type="Proteomes" id="UP000000555">
    <property type="component" value="Chromosome"/>
</dbReference>
<dbReference type="GO" id="GO:0005886">
    <property type="term" value="C:plasma membrane"/>
    <property type="evidence" value="ECO:0007669"/>
    <property type="project" value="UniProtKB-SubCell"/>
</dbReference>
<dbReference type="GO" id="GO:0015611">
    <property type="term" value="F:ABC-type D-ribose transporter activity"/>
    <property type="evidence" value="ECO:0007669"/>
    <property type="project" value="UniProtKB-EC"/>
</dbReference>
<dbReference type="GO" id="GO:0005524">
    <property type="term" value="F:ATP binding"/>
    <property type="evidence" value="ECO:0007669"/>
    <property type="project" value="UniProtKB-KW"/>
</dbReference>
<dbReference type="GO" id="GO:0016887">
    <property type="term" value="F:ATP hydrolysis activity"/>
    <property type="evidence" value="ECO:0007669"/>
    <property type="project" value="InterPro"/>
</dbReference>
<dbReference type="CDD" id="cd03216">
    <property type="entry name" value="ABC_Carb_Monos_I"/>
    <property type="match status" value="1"/>
</dbReference>
<dbReference type="CDD" id="cd03215">
    <property type="entry name" value="ABC_Carb_Monos_II"/>
    <property type="match status" value="1"/>
</dbReference>
<dbReference type="FunFam" id="3.40.50.300:FF:000126">
    <property type="entry name" value="Galactose/methyl galactoside import ATP-binding protein MglA"/>
    <property type="match status" value="1"/>
</dbReference>
<dbReference type="FunFam" id="3.40.50.300:FF:000127">
    <property type="entry name" value="Ribose import ATP-binding protein RbsA"/>
    <property type="match status" value="1"/>
</dbReference>
<dbReference type="Gene3D" id="3.40.50.300">
    <property type="entry name" value="P-loop containing nucleotide triphosphate hydrolases"/>
    <property type="match status" value="2"/>
</dbReference>
<dbReference type="InterPro" id="IPR003593">
    <property type="entry name" value="AAA+_ATPase"/>
</dbReference>
<dbReference type="InterPro" id="IPR050107">
    <property type="entry name" value="ABC_carbohydrate_import_ATPase"/>
</dbReference>
<dbReference type="InterPro" id="IPR003439">
    <property type="entry name" value="ABC_transporter-like_ATP-bd"/>
</dbReference>
<dbReference type="InterPro" id="IPR017871">
    <property type="entry name" value="ABC_transporter-like_CS"/>
</dbReference>
<dbReference type="InterPro" id="IPR027417">
    <property type="entry name" value="P-loop_NTPase"/>
</dbReference>
<dbReference type="PANTHER" id="PTHR43790">
    <property type="entry name" value="CARBOHYDRATE TRANSPORT ATP-BINDING PROTEIN MG119-RELATED"/>
    <property type="match status" value="1"/>
</dbReference>
<dbReference type="PANTHER" id="PTHR43790:SF3">
    <property type="entry name" value="D-ALLOSE IMPORT ATP-BINDING PROTEIN ALSA-RELATED"/>
    <property type="match status" value="1"/>
</dbReference>
<dbReference type="Pfam" id="PF00005">
    <property type="entry name" value="ABC_tran"/>
    <property type="match status" value="2"/>
</dbReference>
<dbReference type="SMART" id="SM00382">
    <property type="entry name" value="AAA"/>
    <property type="match status" value="2"/>
</dbReference>
<dbReference type="SUPFAM" id="SSF52540">
    <property type="entry name" value="P-loop containing nucleoside triphosphate hydrolases"/>
    <property type="match status" value="2"/>
</dbReference>
<dbReference type="PROSITE" id="PS00211">
    <property type="entry name" value="ABC_TRANSPORTER_1"/>
    <property type="match status" value="2"/>
</dbReference>
<dbReference type="PROSITE" id="PS50893">
    <property type="entry name" value="ABC_TRANSPORTER_2"/>
    <property type="match status" value="2"/>
</dbReference>
<dbReference type="PROSITE" id="PS51254">
    <property type="entry name" value="RBSA"/>
    <property type="match status" value="1"/>
</dbReference>
<proteinExistence type="inferred from homology"/>
<organism>
    <name type="scientific">Caldanaerobacter subterraneus subsp. tengcongensis (strain DSM 15242 / JCM 11007 / NBRC 100824 / MB4)</name>
    <name type="common">Thermoanaerobacter tengcongensis</name>
    <dbReference type="NCBI Taxonomy" id="273068"/>
    <lineage>
        <taxon>Bacteria</taxon>
        <taxon>Bacillati</taxon>
        <taxon>Bacillota</taxon>
        <taxon>Clostridia</taxon>
        <taxon>Thermoanaerobacterales</taxon>
        <taxon>Thermoanaerobacteraceae</taxon>
        <taxon>Caldanaerobacter</taxon>
    </lineage>
</organism>
<protein>
    <recommendedName>
        <fullName evidence="1">Ribose import ATP-binding protein RbsA</fullName>
        <ecNumber evidence="1">7.5.2.7</ecNumber>
    </recommendedName>
</protein>
<reference key="1">
    <citation type="journal article" date="2002" name="Genome Res.">
        <title>A complete sequence of the T. tengcongensis genome.</title>
        <authorList>
            <person name="Bao Q."/>
            <person name="Tian Y."/>
            <person name="Li W."/>
            <person name="Xu Z."/>
            <person name="Xuan Z."/>
            <person name="Hu S."/>
            <person name="Dong W."/>
            <person name="Yang J."/>
            <person name="Chen Y."/>
            <person name="Xue Y."/>
            <person name="Xu Y."/>
            <person name="Lai X."/>
            <person name="Huang L."/>
            <person name="Dong X."/>
            <person name="Ma Y."/>
            <person name="Ling L."/>
            <person name="Tan H."/>
            <person name="Chen R."/>
            <person name="Wang J."/>
            <person name="Yu J."/>
            <person name="Yang H."/>
        </authorList>
    </citation>
    <scope>NUCLEOTIDE SEQUENCE [LARGE SCALE GENOMIC DNA]</scope>
    <source>
        <strain>DSM 15242 / JCM 11007 / NBRC 100824 / MB4</strain>
    </source>
</reference>
<sequence>MEPILQMKGISKKFGNVKVLDNVDLTLYRGRVLALLGENGAGKSTLMKILCGIYEKDEGSIYLKGKKVNIRNVRDAEKYGIAMIHQELNLVPSLSVAENIFLGREYVRTFNSIDWKKIKQESAKILHELGMDLNVDRLVKHLSVGEQQMVEIARSLLMNAEILVMDEPTAALTEGETRRLFEVIKRLRKEGKSIIYISHRMNEIFEICDDYIVLRDGCLISQGEISEVTRDDLVKMMVGRELKEHFPYECSSPGEEILRVENLTVKGMFEKVSFVVKKGEVVGFAGLIGAGRTEVAKTIFGFYKKTSGKIYLGGEEVKINSPRDAIEKGIMYLSEDRRNEGLIIKHTLKENMTLSALKKISDYIGTINFSKERSIVNEMIQKLNIKSFSPNQKIFRLSGGNQQKVAIAKCLLTNPKLIILDEPTRGIDVGAKNEIYKLINDLKRQGIGIILISSELPEVLNISDRIIVMHEGKITGEISREEATEEKVMLKAVGGE</sequence>
<gene>
    <name evidence="1" type="primary">rbsA</name>
    <name type="ordered locus">TTE0204</name>
</gene>
<name>RBSA_CALS4</name>
<keyword id="KW-0067">ATP-binding</keyword>
<keyword id="KW-1003">Cell membrane</keyword>
<keyword id="KW-0472">Membrane</keyword>
<keyword id="KW-0547">Nucleotide-binding</keyword>
<keyword id="KW-1185">Reference proteome</keyword>
<keyword id="KW-0677">Repeat</keyword>
<keyword id="KW-0762">Sugar transport</keyword>
<keyword id="KW-1278">Translocase</keyword>
<keyword id="KW-0813">Transport</keyword>
<comment type="function">
    <text evidence="1">Part of the ABC transporter complex RbsABC involved in ribose import. Responsible for energy coupling to the transport system.</text>
</comment>
<comment type="catalytic activity">
    <reaction evidence="1">
        <text>D-ribose(out) + ATP + H2O = D-ribose(in) + ADP + phosphate + H(+)</text>
        <dbReference type="Rhea" id="RHEA:29903"/>
        <dbReference type="ChEBI" id="CHEBI:15377"/>
        <dbReference type="ChEBI" id="CHEBI:15378"/>
        <dbReference type="ChEBI" id="CHEBI:30616"/>
        <dbReference type="ChEBI" id="CHEBI:43474"/>
        <dbReference type="ChEBI" id="CHEBI:47013"/>
        <dbReference type="ChEBI" id="CHEBI:456216"/>
        <dbReference type="EC" id="7.5.2.7"/>
    </reaction>
</comment>
<comment type="subunit">
    <text evidence="1">The complex is composed of an ATP-binding protein (RbsA), two transmembrane proteins (RbsC) and a solute-binding protein (RbsB).</text>
</comment>
<comment type="subcellular location">
    <subcellularLocation>
        <location evidence="1">Cell membrane</location>
        <topology evidence="1">Peripheral membrane protein</topology>
    </subcellularLocation>
</comment>
<comment type="similarity">
    <text evidence="1">Belongs to the ABC transporter superfamily. Ribose importer (TC 3.A.1.2.1) family.</text>
</comment>